<reference key="1">
    <citation type="journal article" date="2009" name="Environ. Microbiol.">
        <title>The genome of Polaromonas naphthalenivorans strain CJ2, isolated from coal tar-contaminated sediment, reveals physiological and metabolic versatility and evolution through extensive horizontal gene transfer.</title>
        <authorList>
            <person name="Yagi J.M."/>
            <person name="Sims D."/>
            <person name="Brettin T."/>
            <person name="Bruce D."/>
            <person name="Madsen E.L."/>
        </authorList>
    </citation>
    <scope>NUCLEOTIDE SEQUENCE [LARGE SCALE GENOMIC DNA]</scope>
    <source>
        <strain>CJ2</strain>
    </source>
</reference>
<accession>A1VJ36</accession>
<sequence length="37" mass="4321">MRVSASVKKICRNCKIIRRKGVVRVICTDPRHKQRQG</sequence>
<keyword id="KW-1185">Reference proteome</keyword>
<keyword id="KW-0687">Ribonucleoprotein</keyword>
<keyword id="KW-0689">Ribosomal protein</keyword>
<dbReference type="EMBL" id="CP000529">
    <property type="protein sequence ID" value="ABM35664.1"/>
    <property type="molecule type" value="Genomic_DNA"/>
</dbReference>
<dbReference type="RefSeq" id="WP_011481465.1">
    <property type="nucleotide sequence ID" value="NC_008781.1"/>
</dbReference>
<dbReference type="SMR" id="A1VJ36"/>
<dbReference type="STRING" id="365044.Pnap_0341"/>
<dbReference type="KEGG" id="pna:Pnap_0341"/>
<dbReference type="eggNOG" id="COG0257">
    <property type="taxonomic scope" value="Bacteria"/>
</dbReference>
<dbReference type="HOGENOM" id="CLU_135723_6_2_4"/>
<dbReference type="OrthoDB" id="9802520at2"/>
<dbReference type="Proteomes" id="UP000000644">
    <property type="component" value="Chromosome"/>
</dbReference>
<dbReference type="GO" id="GO:0005737">
    <property type="term" value="C:cytoplasm"/>
    <property type="evidence" value="ECO:0007669"/>
    <property type="project" value="UniProtKB-ARBA"/>
</dbReference>
<dbReference type="GO" id="GO:1990904">
    <property type="term" value="C:ribonucleoprotein complex"/>
    <property type="evidence" value="ECO:0007669"/>
    <property type="project" value="UniProtKB-KW"/>
</dbReference>
<dbReference type="GO" id="GO:0005840">
    <property type="term" value="C:ribosome"/>
    <property type="evidence" value="ECO:0007669"/>
    <property type="project" value="UniProtKB-KW"/>
</dbReference>
<dbReference type="GO" id="GO:0003735">
    <property type="term" value="F:structural constituent of ribosome"/>
    <property type="evidence" value="ECO:0007669"/>
    <property type="project" value="InterPro"/>
</dbReference>
<dbReference type="GO" id="GO:0006412">
    <property type="term" value="P:translation"/>
    <property type="evidence" value="ECO:0007669"/>
    <property type="project" value="UniProtKB-UniRule"/>
</dbReference>
<dbReference type="HAMAP" id="MF_00251">
    <property type="entry name" value="Ribosomal_bL36"/>
    <property type="match status" value="1"/>
</dbReference>
<dbReference type="InterPro" id="IPR000473">
    <property type="entry name" value="Ribosomal_bL36"/>
</dbReference>
<dbReference type="InterPro" id="IPR035977">
    <property type="entry name" value="Ribosomal_bL36_sp"/>
</dbReference>
<dbReference type="NCBIfam" id="TIGR01022">
    <property type="entry name" value="rpmJ_bact"/>
    <property type="match status" value="1"/>
</dbReference>
<dbReference type="PANTHER" id="PTHR42888">
    <property type="entry name" value="50S RIBOSOMAL PROTEIN L36, CHLOROPLASTIC"/>
    <property type="match status" value="1"/>
</dbReference>
<dbReference type="PANTHER" id="PTHR42888:SF1">
    <property type="entry name" value="LARGE RIBOSOMAL SUBUNIT PROTEIN BL36C"/>
    <property type="match status" value="1"/>
</dbReference>
<dbReference type="Pfam" id="PF00444">
    <property type="entry name" value="Ribosomal_L36"/>
    <property type="match status" value="1"/>
</dbReference>
<dbReference type="SUPFAM" id="SSF57840">
    <property type="entry name" value="Ribosomal protein L36"/>
    <property type="match status" value="1"/>
</dbReference>
<dbReference type="PROSITE" id="PS00828">
    <property type="entry name" value="RIBOSOMAL_L36"/>
    <property type="match status" value="1"/>
</dbReference>
<name>RL36_POLNA</name>
<proteinExistence type="inferred from homology"/>
<evidence type="ECO:0000255" key="1">
    <source>
        <dbReference type="HAMAP-Rule" id="MF_00251"/>
    </source>
</evidence>
<evidence type="ECO:0000305" key="2"/>
<feature type="chain" id="PRO_0000302264" description="Large ribosomal subunit protein bL36">
    <location>
        <begin position="1"/>
        <end position="37"/>
    </location>
</feature>
<comment type="similarity">
    <text evidence="1">Belongs to the bacterial ribosomal protein bL36 family.</text>
</comment>
<gene>
    <name evidence="1" type="primary">rpmJ</name>
    <name type="ordered locus">Pnap_0341</name>
</gene>
<organism>
    <name type="scientific">Polaromonas naphthalenivorans (strain CJ2)</name>
    <dbReference type="NCBI Taxonomy" id="365044"/>
    <lineage>
        <taxon>Bacteria</taxon>
        <taxon>Pseudomonadati</taxon>
        <taxon>Pseudomonadota</taxon>
        <taxon>Betaproteobacteria</taxon>
        <taxon>Burkholderiales</taxon>
        <taxon>Comamonadaceae</taxon>
        <taxon>Polaromonas</taxon>
    </lineage>
</organism>
<protein>
    <recommendedName>
        <fullName evidence="1">Large ribosomal subunit protein bL36</fullName>
    </recommendedName>
    <alternativeName>
        <fullName evidence="2">50S ribosomal protein L36</fullName>
    </alternativeName>
</protein>